<comment type="function">
    <text evidence="1">Component of the chaperonin-containing T-complex (TRiC), a molecular chaperone complex that assists the folding of actin, tubulin and other proteins upon ATP hydrolysis. The TRiC complex mediates the folding of WRAP53/TCAB1, thereby regulating telomere maintenance. As part of the TRiC complex may play a role in the assembly of BBSome, a complex involved in ciliogenesis regulating transports vesicles to the cilia.</text>
</comment>
<comment type="catalytic activity">
    <reaction evidence="1">
        <text>ATP + H2O = ADP + phosphate + H(+)</text>
        <dbReference type="Rhea" id="RHEA:13065"/>
        <dbReference type="ChEBI" id="CHEBI:15377"/>
        <dbReference type="ChEBI" id="CHEBI:15378"/>
        <dbReference type="ChEBI" id="CHEBI:30616"/>
        <dbReference type="ChEBI" id="CHEBI:43474"/>
        <dbReference type="ChEBI" id="CHEBI:456216"/>
    </reaction>
</comment>
<comment type="subunit">
    <text evidence="1 2">Component of the chaperonin-containing T-complex (TRiC), a hexadecamer composed of two identical back-to-back stacked rings enclosing a protein folding chamber. Each ring is made up of eight different subunits: TCP1/CCT1, CCT2, CCT3, CCT4, CCT5, CCT6A/CCT6, CCT7, CCT8 (By similarity). Interacts with PACRG (By similarity). Interacts with FLCN (By similarity). Interacts with DLEC1 (By similarity). Interacts with SVEP1 (PubMed:36792666).</text>
</comment>
<comment type="subcellular location">
    <subcellularLocation>
        <location evidence="1">Cytoplasm</location>
    </subcellularLocation>
</comment>
<comment type="PTM">
    <text>The N-terminus is blocked.</text>
</comment>
<comment type="similarity">
    <text evidence="3">Belongs to the TCP-1 chaperonin family.</text>
</comment>
<organism>
    <name type="scientific">Mus musculus</name>
    <name type="common">Mouse</name>
    <dbReference type="NCBI Taxonomy" id="10090"/>
    <lineage>
        <taxon>Eukaryota</taxon>
        <taxon>Metazoa</taxon>
        <taxon>Chordata</taxon>
        <taxon>Craniata</taxon>
        <taxon>Vertebrata</taxon>
        <taxon>Euteleostomi</taxon>
        <taxon>Mammalia</taxon>
        <taxon>Eutheria</taxon>
        <taxon>Euarchontoglires</taxon>
        <taxon>Glires</taxon>
        <taxon>Rodentia</taxon>
        <taxon>Myomorpha</taxon>
        <taxon>Muroidea</taxon>
        <taxon>Muridae</taxon>
        <taxon>Murinae</taxon>
        <taxon>Mus</taxon>
        <taxon>Mus</taxon>
    </lineage>
</organism>
<sequence>MASLSLAPVNIFKAGADEERAETARLSSFIGAIAIGDLVKSTLGPKGMDKILLSSGRDAALMVTNDGATILKNIGVDNPAAKVLVDMSRVQDDEVGDGTTSVTVLAAELLREAESLIAKKIHPQTIISGWREATKAAREALLSSAVDHGSDEARFWQDLMNIAGTTLSSKLLTHHKDHFTKLAVEAVLRLKGSGNLEAIHVIKKLGGSLADSYLDEGFLLDKKIGVNQPKRIENAKILIANTGMDTDKIKIFGSRVRVDSTAKVAEIEHAEKEKMKEKVERILKHGINCFINRQLIYNYPEQLFGAAGVMAIEHADFAGVERLALVTGGEIASTFDHPELVKLGSCKLIEEVMIGEDKLIHFSGVALGEACTIVLRGATQQILDEAERSLHDALCVLAQTVKDPRTVYGGGCSEMLMAHAVTQLANRTPGKEAVAMESFAKALRMLPTIIADNAGYDSADLVAQLRAAHSEGHITAGLDMKEGTIGDMAVLGITESFQVKRQVLLSAAEAAEVILRVDNIIKAAPRKRVPDHHPC</sequence>
<evidence type="ECO:0000250" key="1">
    <source>
        <dbReference type="UniProtKB" id="P78371"/>
    </source>
</evidence>
<evidence type="ECO:0000269" key="2">
    <source>
    </source>
</evidence>
<evidence type="ECO:0000305" key="3"/>
<accession>P80314</accession>
<accession>Q9R1U0</accession>
<name>TCPB_MOUSE</name>
<gene>
    <name type="primary">Cct2</name>
    <name type="synonym">Cctb</name>
</gene>
<protein>
    <recommendedName>
        <fullName>T-complex protein 1 subunit beta</fullName>
        <shortName>TCP-1-beta</shortName>
        <ecNumber evidence="1">3.6.1.-</ecNumber>
    </recommendedName>
    <alternativeName>
        <fullName>CCT-beta</fullName>
    </alternativeName>
</protein>
<reference key="1">
    <citation type="journal article" date="1994" name="Curr. Biol.">
        <title>Identification of six Tcp-1-related genes encoding divergent subunits of the TCP-1-containing chaperonin.</title>
        <authorList>
            <person name="Kubota H."/>
            <person name="Hynes G."/>
            <person name="Carne A."/>
            <person name="Ashworth A."/>
            <person name="Willison K.R."/>
        </authorList>
    </citation>
    <scope>NUCLEOTIDE SEQUENCE [MRNA]</scope>
    <scope>PARTIAL PROTEIN SEQUENCE</scope>
    <source>
        <strain>129/Sv</strain>
    </source>
</reference>
<reference key="2">
    <citation type="journal article" date="1999" name="Eur. J. Biochem.">
        <title>Structures and co-regulated expression of the genes encoding mouse cytosolic chaperonin CCT subunits.</title>
        <authorList>
            <person name="Kubota H."/>
            <person name="Yokota S."/>
            <person name="Yanagi H."/>
            <person name="Yura T."/>
        </authorList>
    </citation>
    <scope>NUCLEOTIDE SEQUENCE [GENOMIC DNA]</scope>
    <source>
        <strain>129/Sv</strain>
    </source>
</reference>
<reference key="3">
    <citation type="journal article" date="2004" name="Genome Res.">
        <title>The status, quality, and expansion of the NIH full-length cDNA project: the Mammalian Gene Collection (MGC).</title>
        <authorList>
            <consortium name="The MGC Project Team"/>
        </authorList>
    </citation>
    <scope>NUCLEOTIDE SEQUENCE [LARGE SCALE MRNA]</scope>
    <source>
        <tissue>Eye</tissue>
    </source>
</reference>
<reference key="4">
    <citation type="submission" date="2009-01" db="UniProtKB">
        <authorList>
            <person name="Lubec G."/>
            <person name="Klug S."/>
            <person name="Yang J.W."/>
            <person name="Zigmond M."/>
            <person name="Sunyer B."/>
            <person name="Chen W.-Q."/>
        </authorList>
    </citation>
    <scope>PROTEIN SEQUENCE OF 26-40; 51-82; 90-131; 139-170; 182-189; 192-203; 205-223; 224-230; 237-248; 264-272; 285-293; 323-342; 348-402; 406-427; 432-441; 445-500 AND 502-516</scope>
    <scope>IDENTIFICATION BY MASS SPECTROMETRY</scope>
    <source>
        <strain>OF1</strain>
        <tissue>Brain</tissue>
        <tissue>Hippocampus</tissue>
    </source>
</reference>
<reference key="5">
    <citation type="journal article" date="2010" name="Cell">
        <title>A tissue-specific atlas of mouse protein phosphorylation and expression.</title>
        <authorList>
            <person name="Huttlin E.L."/>
            <person name="Jedrychowski M.P."/>
            <person name="Elias J.E."/>
            <person name="Goswami T."/>
            <person name="Rad R."/>
            <person name="Beausoleil S.A."/>
            <person name="Villen J."/>
            <person name="Haas W."/>
            <person name="Sowa M.E."/>
            <person name="Gygi S.P."/>
        </authorList>
    </citation>
    <scope>IDENTIFICATION BY MASS SPECTROMETRY [LARGE SCALE ANALYSIS]</scope>
    <source>
        <tissue>Brain</tissue>
        <tissue>Brown adipose tissue</tissue>
        <tissue>Heart</tissue>
        <tissue>Kidney</tissue>
        <tissue>Liver</tissue>
        <tissue>Lung</tissue>
        <tissue>Pancreas</tissue>
        <tissue>Spleen</tissue>
        <tissue>Testis</tissue>
    </source>
</reference>
<reference key="6">
    <citation type="journal article" date="2023" name="Nat. Commun.">
        <title>SVEP1 is an endogenous ligand for the orphan receptor PEAR1.</title>
        <authorList>
            <person name="Elenbaas J.S."/>
            <person name="Pudupakkam U."/>
            <person name="Ashworth K.J."/>
            <person name="Kang C.J."/>
            <person name="Patel V."/>
            <person name="Santana K."/>
            <person name="Jung I.H."/>
            <person name="Lee P.C."/>
            <person name="Burks K.H."/>
            <person name="Amrute J.M."/>
            <person name="Mecham R.P."/>
            <person name="Halabi C.M."/>
            <person name="Alisio A."/>
            <person name="Di Paola J."/>
            <person name="Stitziel N.O."/>
        </authorList>
    </citation>
    <scope>INTERACTION WITH SVEP1</scope>
</reference>
<dbReference type="EC" id="3.6.1.-" evidence="1"/>
<dbReference type="EMBL" id="Z31553">
    <property type="protein sequence ID" value="CAA83428.1"/>
    <property type="molecule type" value="mRNA"/>
</dbReference>
<dbReference type="EMBL" id="AB022156">
    <property type="protein sequence ID" value="BAA81874.1"/>
    <property type="molecule type" value="Genomic_DNA"/>
</dbReference>
<dbReference type="EMBL" id="BC007470">
    <property type="protein sequence ID" value="AAH07470.1"/>
    <property type="molecule type" value="mRNA"/>
</dbReference>
<dbReference type="EMBL" id="BC026918">
    <property type="protein sequence ID" value="AAH26918.1"/>
    <property type="molecule type" value="mRNA"/>
</dbReference>
<dbReference type="CCDS" id="CCDS36067.1"/>
<dbReference type="PIR" id="S43059">
    <property type="entry name" value="S43059"/>
</dbReference>
<dbReference type="RefSeq" id="NP_001345696.1">
    <property type="nucleotide sequence ID" value="NM_001358767.1"/>
</dbReference>
<dbReference type="RefSeq" id="NP_031662.2">
    <property type="nucleotide sequence ID" value="NM_007636.3"/>
</dbReference>
<dbReference type="RefSeq" id="XP_006513224.1">
    <property type="nucleotide sequence ID" value="XM_006513161.2"/>
</dbReference>
<dbReference type="SMR" id="P80314"/>
<dbReference type="BioGRID" id="198564">
    <property type="interactions" value="81"/>
</dbReference>
<dbReference type="CORUM" id="P80314"/>
<dbReference type="DIP" id="DIP-32343N"/>
<dbReference type="FunCoup" id="P80314">
    <property type="interactions" value="3466"/>
</dbReference>
<dbReference type="IntAct" id="P80314">
    <property type="interactions" value="52"/>
</dbReference>
<dbReference type="MINT" id="P80314"/>
<dbReference type="STRING" id="10090.ENSMUSP00000036288"/>
<dbReference type="GlyGen" id="P80314">
    <property type="glycosylation" value="1 site, 1 O-linked glycan (1 site)"/>
</dbReference>
<dbReference type="iPTMnet" id="P80314"/>
<dbReference type="MetOSite" id="P80314"/>
<dbReference type="PhosphoSitePlus" id="P80314"/>
<dbReference type="SwissPalm" id="P80314"/>
<dbReference type="REPRODUCTION-2DPAGE" id="P80314"/>
<dbReference type="jPOST" id="P80314"/>
<dbReference type="PaxDb" id="10090-ENSMUSP00000036288"/>
<dbReference type="PeptideAtlas" id="P80314"/>
<dbReference type="ProteomicsDB" id="263093"/>
<dbReference type="Pumba" id="P80314"/>
<dbReference type="Antibodypedia" id="762">
    <property type="antibodies" value="362 antibodies from 39 providers"/>
</dbReference>
<dbReference type="DNASU" id="12461"/>
<dbReference type="Ensembl" id="ENSMUST00000047672.9">
    <property type="protein sequence ID" value="ENSMUSP00000036288.8"/>
    <property type="gene ID" value="ENSMUSG00000034024.9"/>
</dbReference>
<dbReference type="GeneID" id="12461"/>
<dbReference type="KEGG" id="mmu:12461"/>
<dbReference type="UCSC" id="uc007hcs.1">
    <property type="organism name" value="mouse"/>
</dbReference>
<dbReference type="AGR" id="MGI:107186"/>
<dbReference type="CTD" id="10576"/>
<dbReference type="MGI" id="MGI:107186">
    <property type="gene designation" value="Cct2"/>
</dbReference>
<dbReference type="VEuPathDB" id="HostDB:ENSMUSG00000034024"/>
<dbReference type="eggNOG" id="KOG0363">
    <property type="taxonomic scope" value="Eukaryota"/>
</dbReference>
<dbReference type="GeneTree" id="ENSGT00550000074930"/>
<dbReference type="HOGENOM" id="CLU_008891_6_2_1"/>
<dbReference type="InParanoid" id="P80314"/>
<dbReference type="OMA" id="CAEMVMS"/>
<dbReference type="OrthoDB" id="10259763at2759"/>
<dbReference type="PhylomeDB" id="P80314"/>
<dbReference type="TreeFam" id="TF105645"/>
<dbReference type="BRENDA" id="3.6.4.B10">
    <property type="organism ID" value="3474"/>
</dbReference>
<dbReference type="Reactome" id="R-MMU-390471">
    <property type="pathway name" value="Association of TriC/CCT with target proteins during biosynthesis"/>
</dbReference>
<dbReference type="Reactome" id="R-MMU-6798695">
    <property type="pathway name" value="Neutrophil degranulation"/>
</dbReference>
<dbReference type="Reactome" id="R-MMU-6814122">
    <property type="pathway name" value="Cooperation of PDCL (PhLP1) and TRiC/CCT in G-protein beta folding"/>
</dbReference>
<dbReference type="Reactome" id="R-MMU-9013418">
    <property type="pathway name" value="RHOBTB2 GTPase cycle"/>
</dbReference>
<dbReference type="Reactome" id="R-MMU-9013422">
    <property type="pathway name" value="RHOBTB1 GTPase cycle"/>
</dbReference>
<dbReference type="BioGRID-ORCS" id="12461">
    <property type="hits" value="30 hits in 81 CRISPR screens"/>
</dbReference>
<dbReference type="CD-CODE" id="CE726F99">
    <property type="entry name" value="Postsynaptic density"/>
</dbReference>
<dbReference type="ChiTaRS" id="Cct2">
    <property type="organism name" value="mouse"/>
</dbReference>
<dbReference type="PRO" id="PR:P80314"/>
<dbReference type="Proteomes" id="UP000000589">
    <property type="component" value="Chromosome 10"/>
</dbReference>
<dbReference type="RNAct" id="P80314">
    <property type="molecule type" value="protein"/>
</dbReference>
<dbReference type="Bgee" id="ENSMUSG00000034024">
    <property type="expression patterns" value="Expressed in superior cervical ganglion and 247 other cell types or tissues"/>
</dbReference>
<dbReference type="ExpressionAtlas" id="P80314">
    <property type="expression patterns" value="baseline and differential"/>
</dbReference>
<dbReference type="GO" id="GO:0044297">
    <property type="term" value="C:cell body"/>
    <property type="evidence" value="ECO:0000314"/>
    <property type="project" value="MGI"/>
</dbReference>
<dbReference type="GO" id="GO:0005832">
    <property type="term" value="C:chaperonin-containing T-complex"/>
    <property type="evidence" value="ECO:0000314"/>
    <property type="project" value="MGI"/>
</dbReference>
<dbReference type="GO" id="GO:0005874">
    <property type="term" value="C:microtubule"/>
    <property type="evidence" value="ECO:0007669"/>
    <property type="project" value="Ensembl"/>
</dbReference>
<dbReference type="GO" id="GO:0043209">
    <property type="term" value="C:myelin sheath"/>
    <property type="evidence" value="ECO:0007005"/>
    <property type="project" value="UniProtKB"/>
</dbReference>
<dbReference type="GO" id="GO:0002199">
    <property type="term" value="C:zona pellucida receptor complex"/>
    <property type="evidence" value="ECO:0000314"/>
    <property type="project" value="MGI"/>
</dbReference>
<dbReference type="GO" id="GO:0005524">
    <property type="term" value="F:ATP binding"/>
    <property type="evidence" value="ECO:0007669"/>
    <property type="project" value="UniProtKB-KW"/>
</dbReference>
<dbReference type="GO" id="GO:0016887">
    <property type="term" value="F:ATP hydrolysis activity"/>
    <property type="evidence" value="ECO:0007669"/>
    <property type="project" value="InterPro"/>
</dbReference>
<dbReference type="GO" id="GO:0140662">
    <property type="term" value="F:ATP-dependent protein folding chaperone"/>
    <property type="evidence" value="ECO:0007669"/>
    <property type="project" value="InterPro"/>
</dbReference>
<dbReference type="GO" id="GO:0031625">
    <property type="term" value="F:ubiquitin protein ligase binding"/>
    <property type="evidence" value="ECO:0007669"/>
    <property type="project" value="Ensembl"/>
</dbReference>
<dbReference type="GO" id="GO:0051082">
    <property type="term" value="F:unfolded protein binding"/>
    <property type="evidence" value="ECO:0007669"/>
    <property type="project" value="InterPro"/>
</dbReference>
<dbReference type="GO" id="GO:0007339">
    <property type="term" value="P:binding of sperm to zona pellucida"/>
    <property type="evidence" value="ECO:0000314"/>
    <property type="project" value="MGI"/>
</dbReference>
<dbReference type="GO" id="GO:0051086">
    <property type="term" value="P:chaperone mediated protein folding independent of cofactor"/>
    <property type="evidence" value="ECO:0007669"/>
    <property type="project" value="Ensembl"/>
</dbReference>
<dbReference type="GO" id="GO:0051131">
    <property type="term" value="P:chaperone-mediated protein complex assembly"/>
    <property type="evidence" value="ECO:0000266"/>
    <property type="project" value="MGI"/>
</dbReference>
<dbReference type="GO" id="GO:1904874">
    <property type="term" value="P:positive regulation of telomerase RNA localization to Cajal body"/>
    <property type="evidence" value="ECO:0007669"/>
    <property type="project" value="Ensembl"/>
</dbReference>
<dbReference type="GO" id="GO:0032212">
    <property type="term" value="P:positive regulation of telomere maintenance via telomerase"/>
    <property type="evidence" value="ECO:0007669"/>
    <property type="project" value="Ensembl"/>
</dbReference>
<dbReference type="GO" id="GO:0050821">
    <property type="term" value="P:protein stabilization"/>
    <property type="evidence" value="ECO:0007669"/>
    <property type="project" value="Ensembl"/>
</dbReference>
<dbReference type="GO" id="GO:0090666">
    <property type="term" value="P:scaRNA localization to Cajal body"/>
    <property type="evidence" value="ECO:0007669"/>
    <property type="project" value="Ensembl"/>
</dbReference>
<dbReference type="CDD" id="cd03336">
    <property type="entry name" value="TCP1_beta"/>
    <property type="match status" value="1"/>
</dbReference>
<dbReference type="FunFam" id="3.30.260.10:FF:000046">
    <property type="entry name" value="Chaperonin containing TCP1 subunit 2"/>
    <property type="match status" value="1"/>
</dbReference>
<dbReference type="FunFam" id="3.50.7.10:FF:000002">
    <property type="entry name" value="T-complex protein 1 subunit beta"/>
    <property type="match status" value="1"/>
</dbReference>
<dbReference type="FunFam" id="1.10.560.10:FF:000017">
    <property type="entry name" value="T-complex protein 1 subunit eta"/>
    <property type="match status" value="1"/>
</dbReference>
<dbReference type="FunFam" id="1.10.560.10:FF:000045">
    <property type="entry name" value="T-complex protein 1 subunit eta"/>
    <property type="match status" value="1"/>
</dbReference>
<dbReference type="Gene3D" id="3.50.7.10">
    <property type="entry name" value="GroEL"/>
    <property type="match status" value="1"/>
</dbReference>
<dbReference type="Gene3D" id="1.10.560.10">
    <property type="entry name" value="GroEL-like equatorial domain"/>
    <property type="match status" value="1"/>
</dbReference>
<dbReference type="Gene3D" id="3.30.260.10">
    <property type="entry name" value="TCP-1-like chaperonin intermediate domain"/>
    <property type="match status" value="1"/>
</dbReference>
<dbReference type="InterPro" id="IPR012716">
    <property type="entry name" value="Chap_CCT_beta"/>
</dbReference>
<dbReference type="InterPro" id="IPR017998">
    <property type="entry name" value="Chaperone_TCP-1"/>
</dbReference>
<dbReference type="InterPro" id="IPR002194">
    <property type="entry name" value="Chaperonin_TCP-1_CS"/>
</dbReference>
<dbReference type="InterPro" id="IPR002423">
    <property type="entry name" value="Cpn60/GroEL/TCP-1"/>
</dbReference>
<dbReference type="InterPro" id="IPR027409">
    <property type="entry name" value="GroEL-like_apical_dom_sf"/>
</dbReference>
<dbReference type="InterPro" id="IPR027413">
    <property type="entry name" value="GROEL-like_equatorial_sf"/>
</dbReference>
<dbReference type="InterPro" id="IPR027410">
    <property type="entry name" value="TCP-1-like_intermed_sf"/>
</dbReference>
<dbReference type="InterPro" id="IPR053374">
    <property type="entry name" value="TCP-1_chaperonin"/>
</dbReference>
<dbReference type="NCBIfam" id="TIGR02341">
    <property type="entry name" value="chap_CCT_beta"/>
    <property type="match status" value="1"/>
</dbReference>
<dbReference type="NCBIfam" id="NF041083">
    <property type="entry name" value="thermosome_beta"/>
    <property type="match status" value="1"/>
</dbReference>
<dbReference type="PANTHER" id="PTHR11353">
    <property type="entry name" value="CHAPERONIN"/>
    <property type="match status" value="1"/>
</dbReference>
<dbReference type="Pfam" id="PF00118">
    <property type="entry name" value="Cpn60_TCP1"/>
    <property type="match status" value="1"/>
</dbReference>
<dbReference type="PRINTS" id="PR00304">
    <property type="entry name" value="TCOMPLEXTCP1"/>
</dbReference>
<dbReference type="SUPFAM" id="SSF52029">
    <property type="entry name" value="GroEL apical domain-like"/>
    <property type="match status" value="1"/>
</dbReference>
<dbReference type="SUPFAM" id="SSF48592">
    <property type="entry name" value="GroEL equatorial domain-like"/>
    <property type="match status" value="1"/>
</dbReference>
<dbReference type="SUPFAM" id="SSF54849">
    <property type="entry name" value="GroEL-intermediate domain like"/>
    <property type="match status" value="1"/>
</dbReference>
<dbReference type="PROSITE" id="PS00750">
    <property type="entry name" value="TCP1_1"/>
    <property type="match status" value="1"/>
</dbReference>
<dbReference type="PROSITE" id="PS00751">
    <property type="entry name" value="TCP1_2"/>
    <property type="match status" value="1"/>
</dbReference>
<dbReference type="PROSITE" id="PS00995">
    <property type="entry name" value="TCP1_3"/>
    <property type="match status" value="1"/>
</dbReference>
<keyword id="KW-0007">Acetylation</keyword>
<keyword id="KW-0067">ATP-binding</keyword>
<keyword id="KW-0143">Chaperone</keyword>
<keyword id="KW-0963">Cytoplasm</keyword>
<keyword id="KW-0903">Direct protein sequencing</keyword>
<keyword id="KW-0378">Hydrolase</keyword>
<keyword id="KW-1017">Isopeptide bond</keyword>
<keyword id="KW-0460">Magnesium</keyword>
<keyword id="KW-0479">Metal-binding</keyword>
<keyword id="KW-0547">Nucleotide-binding</keyword>
<keyword id="KW-0597">Phosphoprotein</keyword>
<keyword id="KW-1185">Reference proteome</keyword>
<keyword id="KW-0832">Ubl conjugation</keyword>
<proteinExistence type="evidence at protein level"/>
<feature type="initiator methionine" description="Removed" evidence="1">
    <location>
        <position position="1"/>
    </location>
</feature>
<feature type="chain" id="PRO_0000128317" description="T-complex protein 1 subunit beta">
    <location>
        <begin position="2"/>
        <end position="535"/>
    </location>
</feature>
<feature type="binding site" evidence="1">
    <location>
        <position position="44"/>
    </location>
    <ligand>
        <name>ADP</name>
        <dbReference type="ChEBI" id="CHEBI:456216"/>
    </ligand>
</feature>
<feature type="binding site" evidence="1">
    <location>
        <position position="44"/>
    </location>
    <ligand>
        <name>ATP</name>
        <dbReference type="ChEBI" id="CHEBI:30616"/>
    </ligand>
</feature>
<feature type="binding site" evidence="1">
    <location>
        <position position="97"/>
    </location>
    <ligand>
        <name>Mg(2+)</name>
        <dbReference type="ChEBI" id="CHEBI:18420"/>
    </ligand>
</feature>
<feature type="binding site" evidence="1">
    <location>
        <position position="98"/>
    </location>
    <ligand>
        <name>ADP</name>
        <dbReference type="ChEBI" id="CHEBI:456216"/>
    </ligand>
</feature>
<feature type="binding site" evidence="1">
    <location>
        <position position="98"/>
    </location>
    <ligand>
        <name>ATP</name>
        <dbReference type="ChEBI" id="CHEBI:30616"/>
    </ligand>
</feature>
<feature type="binding site" evidence="1">
    <location>
        <position position="99"/>
    </location>
    <ligand>
        <name>ADP</name>
        <dbReference type="ChEBI" id="CHEBI:456216"/>
    </ligand>
</feature>
<feature type="binding site" evidence="1">
    <location>
        <position position="99"/>
    </location>
    <ligand>
        <name>ATP</name>
        <dbReference type="ChEBI" id="CHEBI:30616"/>
    </ligand>
</feature>
<feature type="binding site" evidence="1">
    <location>
        <position position="100"/>
    </location>
    <ligand>
        <name>ADP</name>
        <dbReference type="ChEBI" id="CHEBI:456216"/>
    </ligand>
</feature>
<feature type="binding site" evidence="1">
    <location>
        <position position="100"/>
    </location>
    <ligand>
        <name>ATP</name>
        <dbReference type="ChEBI" id="CHEBI:30616"/>
    </ligand>
</feature>
<feature type="binding site" evidence="1">
    <location>
        <position position="101"/>
    </location>
    <ligand>
        <name>ADP</name>
        <dbReference type="ChEBI" id="CHEBI:456216"/>
    </ligand>
</feature>
<feature type="binding site" evidence="1">
    <location>
        <position position="168"/>
    </location>
    <ligand>
        <name>ADP</name>
        <dbReference type="ChEBI" id="CHEBI:456216"/>
    </ligand>
</feature>
<feature type="binding site" evidence="1">
    <location>
        <position position="169"/>
    </location>
    <ligand>
        <name>ADP</name>
        <dbReference type="ChEBI" id="CHEBI:456216"/>
    </ligand>
</feature>
<feature type="binding site" evidence="1">
    <location>
        <position position="410"/>
    </location>
    <ligand>
        <name>ADP</name>
        <dbReference type="ChEBI" id="CHEBI:456216"/>
    </ligand>
</feature>
<feature type="binding site" evidence="1">
    <location>
        <position position="495"/>
    </location>
    <ligand>
        <name>ADP</name>
        <dbReference type="ChEBI" id="CHEBI:456216"/>
    </ligand>
</feature>
<feature type="binding site" evidence="1">
    <location>
        <position position="495"/>
    </location>
    <ligand>
        <name>ATP</name>
        <dbReference type="ChEBI" id="CHEBI:30616"/>
    </ligand>
</feature>
<feature type="binding site" evidence="1">
    <location>
        <position position="500"/>
    </location>
    <ligand>
        <name>ADP</name>
        <dbReference type="ChEBI" id="CHEBI:456216"/>
    </ligand>
</feature>
<feature type="binding site" evidence="1">
    <location>
        <position position="500"/>
    </location>
    <ligand>
        <name>ATP</name>
        <dbReference type="ChEBI" id="CHEBI:30616"/>
    </ligand>
</feature>
<feature type="modified residue" description="N-acetylalanine" evidence="1">
    <location>
        <position position="2"/>
    </location>
</feature>
<feature type="modified residue" description="Phosphoserine" evidence="1">
    <location>
        <position position="3"/>
    </location>
</feature>
<feature type="modified residue" description="N6-acetyllysine" evidence="1">
    <location>
        <position position="13"/>
    </location>
</feature>
<feature type="modified residue" description="N6-acetyllysine" evidence="1">
    <location>
        <position position="181"/>
    </location>
</feature>
<feature type="modified residue" description="Phosphoserine" evidence="1">
    <location>
        <position position="260"/>
    </location>
</feature>
<feature type="modified residue" description="Phosphothreonine" evidence="1">
    <location>
        <position position="261"/>
    </location>
</feature>
<feature type="cross-link" description="Glycyl lysine isopeptide (Lys-Gly) (interchain with G-Cter in SUMO2)" evidence="1">
    <location>
        <position position="248"/>
    </location>
</feature>
<feature type="sequence conflict" description="In Ref. 1; CAA83428." evidence="3" ref="1">
    <original>T</original>
    <variation>I</variation>
    <location>
        <position position="23"/>
    </location>
</feature>
<feature type="sequence conflict" description="In Ref. 1; CAA83428." evidence="3" ref="1">
    <original>V</original>
    <variation>G</variation>
    <location>
        <position position="187"/>
    </location>
</feature>